<keyword id="KW-0460">Magnesium</keyword>
<keyword id="KW-0464">Manganese</keyword>
<keyword id="KW-0474">Menaquinone biosynthesis</keyword>
<keyword id="KW-0479">Metal-binding</keyword>
<keyword id="KW-1185">Reference proteome</keyword>
<keyword id="KW-0786">Thiamine pyrophosphate</keyword>
<keyword id="KW-0808">Transferase</keyword>
<dbReference type="EC" id="2.2.1.9" evidence="1"/>
<dbReference type="EMBL" id="CP000454">
    <property type="protein sequence ID" value="ABK04516.1"/>
    <property type="molecule type" value="Genomic_DNA"/>
</dbReference>
<dbReference type="SMR" id="A0JZP6"/>
<dbReference type="STRING" id="290399.Arth_3138"/>
<dbReference type="KEGG" id="art:Arth_3138"/>
<dbReference type="eggNOG" id="COG1165">
    <property type="taxonomic scope" value="Bacteria"/>
</dbReference>
<dbReference type="HOGENOM" id="CLU_006051_4_0_11"/>
<dbReference type="UniPathway" id="UPA00079"/>
<dbReference type="UniPathway" id="UPA01057">
    <property type="reaction ID" value="UER00164"/>
</dbReference>
<dbReference type="Proteomes" id="UP000000754">
    <property type="component" value="Chromosome"/>
</dbReference>
<dbReference type="GO" id="GO:0070204">
    <property type="term" value="F:2-succinyl-5-enolpyruvyl-6-hydroxy-3-cyclohexene-1-carboxylic-acid synthase activity"/>
    <property type="evidence" value="ECO:0007669"/>
    <property type="project" value="UniProtKB-UniRule"/>
</dbReference>
<dbReference type="GO" id="GO:0000287">
    <property type="term" value="F:magnesium ion binding"/>
    <property type="evidence" value="ECO:0007669"/>
    <property type="project" value="UniProtKB-UniRule"/>
</dbReference>
<dbReference type="GO" id="GO:0030145">
    <property type="term" value="F:manganese ion binding"/>
    <property type="evidence" value="ECO:0007669"/>
    <property type="project" value="UniProtKB-UniRule"/>
</dbReference>
<dbReference type="GO" id="GO:0030976">
    <property type="term" value="F:thiamine pyrophosphate binding"/>
    <property type="evidence" value="ECO:0007669"/>
    <property type="project" value="UniProtKB-UniRule"/>
</dbReference>
<dbReference type="GO" id="GO:0009234">
    <property type="term" value="P:menaquinone biosynthetic process"/>
    <property type="evidence" value="ECO:0007669"/>
    <property type="project" value="UniProtKB-UniRule"/>
</dbReference>
<dbReference type="CDD" id="cd07037">
    <property type="entry name" value="TPP_PYR_MenD"/>
    <property type="match status" value="1"/>
</dbReference>
<dbReference type="CDD" id="cd02009">
    <property type="entry name" value="TPP_SHCHC_synthase"/>
    <property type="match status" value="1"/>
</dbReference>
<dbReference type="Gene3D" id="3.40.50.970">
    <property type="match status" value="2"/>
</dbReference>
<dbReference type="Gene3D" id="3.40.50.1220">
    <property type="entry name" value="TPP-binding domain"/>
    <property type="match status" value="1"/>
</dbReference>
<dbReference type="HAMAP" id="MF_01659">
    <property type="entry name" value="MenD"/>
    <property type="match status" value="1"/>
</dbReference>
<dbReference type="InterPro" id="IPR004433">
    <property type="entry name" value="MenaQ_synth_MenD"/>
</dbReference>
<dbReference type="InterPro" id="IPR029061">
    <property type="entry name" value="THDP-binding"/>
</dbReference>
<dbReference type="InterPro" id="IPR012001">
    <property type="entry name" value="Thiamin_PyroP_enz_TPP-bd_dom"/>
</dbReference>
<dbReference type="InterPro" id="IPR011766">
    <property type="entry name" value="TPP_enzyme_TPP-bd"/>
</dbReference>
<dbReference type="NCBIfam" id="TIGR00173">
    <property type="entry name" value="menD"/>
    <property type="match status" value="1"/>
</dbReference>
<dbReference type="PANTHER" id="PTHR42916">
    <property type="entry name" value="2-SUCCINYL-5-ENOLPYRUVYL-6-HYDROXY-3-CYCLOHEXENE-1-CARBOXYLATE SYNTHASE"/>
    <property type="match status" value="1"/>
</dbReference>
<dbReference type="PANTHER" id="PTHR42916:SF1">
    <property type="entry name" value="PROTEIN PHYLLO, CHLOROPLASTIC"/>
    <property type="match status" value="1"/>
</dbReference>
<dbReference type="Pfam" id="PF02775">
    <property type="entry name" value="TPP_enzyme_C"/>
    <property type="match status" value="1"/>
</dbReference>
<dbReference type="Pfam" id="PF02776">
    <property type="entry name" value="TPP_enzyme_N"/>
    <property type="match status" value="1"/>
</dbReference>
<dbReference type="PIRSF" id="PIRSF004983">
    <property type="entry name" value="MenD"/>
    <property type="match status" value="1"/>
</dbReference>
<dbReference type="SUPFAM" id="SSF52518">
    <property type="entry name" value="Thiamin diphosphate-binding fold (THDP-binding)"/>
    <property type="match status" value="2"/>
</dbReference>
<proteinExistence type="inferred from homology"/>
<protein>
    <recommendedName>
        <fullName evidence="1">2-succinyl-5-enolpyruvyl-6-hydroxy-3-cyclohexene-1-carboxylate synthase</fullName>
        <shortName evidence="1">SEPHCHC synthase</shortName>
        <ecNumber evidence="1">2.2.1.9</ecNumber>
    </recommendedName>
    <alternativeName>
        <fullName evidence="1">Menaquinone biosynthesis protein MenD</fullName>
    </alternativeName>
</protein>
<organism>
    <name type="scientific">Arthrobacter sp. (strain FB24)</name>
    <dbReference type="NCBI Taxonomy" id="290399"/>
    <lineage>
        <taxon>Bacteria</taxon>
        <taxon>Bacillati</taxon>
        <taxon>Actinomycetota</taxon>
        <taxon>Actinomycetes</taxon>
        <taxon>Micrococcales</taxon>
        <taxon>Micrococcaceae</taxon>
        <taxon>Arthrobacter</taxon>
    </lineage>
</organism>
<comment type="function">
    <text evidence="1">Catalyzes the thiamine diphosphate-dependent decarboxylation of 2-oxoglutarate and the subsequent addition of the resulting succinic semialdehyde-thiamine pyrophosphate anion to isochorismate to yield 2-succinyl-5-enolpyruvyl-6-hydroxy-3-cyclohexene-1-carboxylate (SEPHCHC).</text>
</comment>
<comment type="catalytic activity">
    <reaction evidence="1">
        <text>isochorismate + 2-oxoglutarate + H(+) = 5-enolpyruvoyl-6-hydroxy-2-succinyl-cyclohex-3-ene-1-carboxylate + CO2</text>
        <dbReference type="Rhea" id="RHEA:25593"/>
        <dbReference type="ChEBI" id="CHEBI:15378"/>
        <dbReference type="ChEBI" id="CHEBI:16526"/>
        <dbReference type="ChEBI" id="CHEBI:16810"/>
        <dbReference type="ChEBI" id="CHEBI:29780"/>
        <dbReference type="ChEBI" id="CHEBI:58818"/>
        <dbReference type="EC" id="2.2.1.9"/>
    </reaction>
</comment>
<comment type="cofactor">
    <cofactor evidence="1">
        <name>Mg(2+)</name>
        <dbReference type="ChEBI" id="CHEBI:18420"/>
    </cofactor>
    <cofactor evidence="1">
        <name>Mn(2+)</name>
        <dbReference type="ChEBI" id="CHEBI:29035"/>
    </cofactor>
</comment>
<comment type="cofactor">
    <cofactor evidence="1">
        <name>thiamine diphosphate</name>
        <dbReference type="ChEBI" id="CHEBI:58937"/>
    </cofactor>
    <text evidence="1">Binds 1 thiamine pyrophosphate per subunit.</text>
</comment>
<comment type="pathway">
    <text evidence="1">Quinol/quinone metabolism; 1,4-dihydroxy-2-naphthoate biosynthesis; 1,4-dihydroxy-2-naphthoate from chorismate: step 2/7.</text>
</comment>
<comment type="pathway">
    <text evidence="1">Quinol/quinone metabolism; menaquinone biosynthesis.</text>
</comment>
<comment type="subunit">
    <text evidence="1">Homodimer.</text>
</comment>
<comment type="similarity">
    <text evidence="1">Belongs to the TPP enzyme family. MenD subfamily.</text>
</comment>
<name>MEND_ARTS2</name>
<feature type="chain" id="PRO_0000341702" description="2-succinyl-5-enolpyruvyl-6-hydroxy-3-cyclohexene-1-carboxylate synthase">
    <location>
        <begin position="1"/>
        <end position="599"/>
    </location>
</feature>
<feature type="region of interest" description="Disordered" evidence="2">
    <location>
        <begin position="1"/>
        <end position="35"/>
    </location>
</feature>
<feature type="compositionally biased region" description="Low complexity" evidence="2">
    <location>
        <begin position="1"/>
        <end position="21"/>
    </location>
</feature>
<accession>A0JZP6</accession>
<reference key="1">
    <citation type="journal article" date="2013" name="Stand. Genomic Sci.">
        <title>Complete genome sequence of Arthrobacter sp. strain FB24.</title>
        <authorList>
            <person name="Nakatsu C.H."/>
            <person name="Barabote R."/>
            <person name="Thompson S."/>
            <person name="Bruce D."/>
            <person name="Detter C."/>
            <person name="Brettin T."/>
            <person name="Han C."/>
            <person name="Beasley F."/>
            <person name="Chen W."/>
            <person name="Konopka A."/>
            <person name="Xie G."/>
        </authorList>
    </citation>
    <scope>NUCLEOTIDE SEQUENCE [LARGE SCALE GENOMIC DNA]</scope>
    <source>
        <strain>FB24</strain>
    </source>
</reference>
<evidence type="ECO:0000255" key="1">
    <source>
        <dbReference type="HAMAP-Rule" id="MF_01659"/>
    </source>
</evidence>
<evidence type="ECO:0000256" key="2">
    <source>
        <dbReference type="SAM" id="MobiDB-lite"/>
    </source>
</evidence>
<sequence>MTSENPLDPNNAYAAADDAPLSEGDPTGAPADSGSDTLTAIQAARVAVKTLLDGGVRYVVVSPGSRSAPMAYALAEADAAGRVELLVRIDERSAGFTALGLALSTGAPVAVLTTSGTAVGNLLPAVMEANHAAVPLVVLSADRPDELRGTGANQTTDQLDLFGEHVRFAVDVPAGTNPQRAVETALSAATGVFEDTPPGPVQLNLAFRDPLVPPPADHLPEATGRRTWQIGRGPEPLTLAPAPATLAERRTVVLAGHDAGPVAEAFARAHGLPLLAEPSSNSRFGPNAVGPYRLLLEHFGPDSAQPIERVVLFGRPTLSRPVSALLARADVPSALYQPLPVAWYEPGRRTELPLDNLSDLADFSGRGSSGWLDAWLLAGAAAQHALDQALSEEPAATGPTVGALVWKHARGQLMLGSSNGIRDVDLAGQPAPEPHATIFANRGLAGIDGTISTATGIAWGGRQETTLLLGDVTFLHDAGGLLLGFAENDPLLRIVVLNDAGGAIFNLLEHGAVQESGTYGNAVERLFGTPHKVDISSLAAAYGVEHCAVSTTAELAKALAAPSSGRSIIEVRTDRAGLRKLHGRIKAAVGEAARSVLAG</sequence>
<gene>
    <name evidence="1" type="primary">menD</name>
    <name type="ordered locus">Arth_3138</name>
</gene>